<proteinExistence type="inferred from homology"/>
<protein>
    <recommendedName>
        <fullName evidence="1">tRNA N6-adenosine threonylcarbamoyltransferase</fullName>
        <ecNumber evidence="1">2.3.1.234</ecNumber>
    </recommendedName>
    <alternativeName>
        <fullName evidence="1">N6-L-threonylcarbamoyladenine synthase</fullName>
        <shortName evidence="1">t(6)A synthase</shortName>
    </alternativeName>
    <alternativeName>
        <fullName evidence="1">t(6)A37 threonylcarbamoyladenosine biosynthesis protein TsaD</fullName>
    </alternativeName>
    <alternativeName>
        <fullName evidence="1">tRNA threonylcarbamoyladenosine biosynthesis protein TsaD</fullName>
    </alternativeName>
</protein>
<name>TSAD_PSEP1</name>
<comment type="function">
    <text evidence="1">Required for the formation of a threonylcarbamoyl group on adenosine at position 37 (t(6)A37) in tRNAs that read codons beginning with adenine. Is involved in the transfer of the threonylcarbamoyl moiety of threonylcarbamoyl-AMP (TC-AMP) to the N6 group of A37, together with TsaE and TsaB. TsaD likely plays a direct catalytic role in this reaction.</text>
</comment>
<comment type="catalytic activity">
    <reaction evidence="1">
        <text>L-threonylcarbamoyladenylate + adenosine(37) in tRNA = N(6)-L-threonylcarbamoyladenosine(37) in tRNA + AMP + H(+)</text>
        <dbReference type="Rhea" id="RHEA:37059"/>
        <dbReference type="Rhea" id="RHEA-COMP:10162"/>
        <dbReference type="Rhea" id="RHEA-COMP:10163"/>
        <dbReference type="ChEBI" id="CHEBI:15378"/>
        <dbReference type="ChEBI" id="CHEBI:73682"/>
        <dbReference type="ChEBI" id="CHEBI:74411"/>
        <dbReference type="ChEBI" id="CHEBI:74418"/>
        <dbReference type="ChEBI" id="CHEBI:456215"/>
        <dbReference type="EC" id="2.3.1.234"/>
    </reaction>
</comment>
<comment type="cofactor">
    <cofactor evidence="1">
        <name>Fe(2+)</name>
        <dbReference type="ChEBI" id="CHEBI:29033"/>
    </cofactor>
    <text evidence="1">Binds 1 Fe(2+) ion per subunit.</text>
</comment>
<comment type="subcellular location">
    <subcellularLocation>
        <location evidence="1">Cytoplasm</location>
    </subcellularLocation>
</comment>
<comment type="similarity">
    <text evidence="1">Belongs to the KAE1 / TsaD family.</text>
</comment>
<gene>
    <name evidence="1" type="primary">tsaD</name>
    <name type="synonym">gcp</name>
    <name type="ordered locus">Pput_0424</name>
</gene>
<reference key="1">
    <citation type="submission" date="2007-05" db="EMBL/GenBank/DDBJ databases">
        <title>Complete sequence of Pseudomonas putida F1.</title>
        <authorList>
            <consortium name="US DOE Joint Genome Institute"/>
            <person name="Copeland A."/>
            <person name="Lucas S."/>
            <person name="Lapidus A."/>
            <person name="Barry K."/>
            <person name="Detter J.C."/>
            <person name="Glavina del Rio T."/>
            <person name="Hammon N."/>
            <person name="Israni S."/>
            <person name="Dalin E."/>
            <person name="Tice H."/>
            <person name="Pitluck S."/>
            <person name="Chain P."/>
            <person name="Malfatti S."/>
            <person name="Shin M."/>
            <person name="Vergez L."/>
            <person name="Schmutz J."/>
            <person name="Larimer F."/>
            <person name="Land M."/>
            <person name="Hauser L."/>
            <person name="Kyrpides N."/>
            <person name="Lykidis A."/>
            <person name="Parales R."/>
            <person name="Richardson P."/>
        </authorList>
    </citation>
    <scope>NUCLEOTIDE SEQUENCE [LARGE SCALE GENOMIC DNA]</scope>
    <source>
        <strain>ATCC 700007 / DSM 6899 / JCM 31910 / BCRC 17059 / LMG 24140 / F1</strain>
    </source>
</reference>
<dbReference type="EC" id="2.3.1.234" evidence="1"/>
<dbReference type="EMBL" id="CP000712">
    <property type="protein sequence ID" value="ABQ76594.1"/>
    <property type="molecule type" value="Genomic_DNA"/>
</dbReference>
<dbReference type="SMR" id="A5VXI4"/>
<dbReference type="KEGG" id="ppf:Pput_0424"/>
<dbReference type="eggNOG" id="COG0533">
    <property type="taxonomic scope" value="Bacteria"/>
</dbReference>
<dbReference type="HOGENOM" id="CLU_023208_0_0_6"/>
<dbReference type="GO" id="GO:0005737">
    <property type="term" value="C:cytoplasm"/>
    <property type="evidence" value="ECO:0007669"/>
    <property type="project" value="UniProtKB-SubCell"/>
</dbReference>
<dbReference type="GO" id="GO:0005506">
    <property type="term" value="F:iron ion binding"/>
    <property type="evidence" value="ECO:0007669"/>
    <property type="project" value="UniProtKB-UniRule"/>
</dbReference>
<dbReference type="GO" id="GO:0061711">
    <property type="term" value="F:N(6)-L-threonylcarbamoyladenine synthase activity"/>
    <property type="evidence" value="ECO:0007669"/>
    <property type="project" value="UniProtKB-EC"/>
</dbReference>
<dbReference type="GO" id="GO:0002949">
    <property type="term" value="P:tRNA threonylcarbamoyladenosine modification"/>
    <property type="evidence" value="ECO:0007669"/>
    <property type="project" value="UniProtKB-UniRule"/>
</dbReference>
<dbReference type="CDD" id="cd24133">
    <property type="entry name" value="ASKHA_NBD_TsaD_bac"/>
    <property type="match status" value="1"/>
</dbReference>
<dbReference type="FunFam" id="3.30.420.40:FF:000012">
    <property type="entry name" value="tRNA N6-adenosine threonylcarbamoyltransferase"/>
    <property type="match status" value="1"/>
</dbReference>
<dbReference type="FunFam" id="3.30.420.40:FF:000031">
    <property type="entry name" value="tRNA N6-adenosine threonylcarbamoyltransferase"/>
    <property type="match status" value="1"/>
</dbReference>
<dbReference type="Gene3D" id="3.30.420.40">
    <property type="match status" value="2"/>
</dbReference>
<dbReference type="HAMAP" id="MF_01445">
    <property type="entry name" value="TsaD"/>
    <property type="match status" value="1"/>
</dbReference>
<dbReference type="InterPro" id="IPR043129">
    <property type="entry name" value="ATPase_NBD"/>
</dbReference>
<dbReference type="InterPro" id="IPR000905">
    <property type="entry name" value="Gcp-like_dom"/>
</dbReference>
<dbReference type="InterPro" id="IPR017861">
    <property type="entry name" value="KAE1/TsaD"/>
</dbReference>
<dbReference type="InterPro" id="IPR022450">
    <property type="entry name" value="TsaD"/>
</dbReference>
<dbReference type="NCBIfam" id="TIGR00329">
    <property type="entry name" value="gcp_kae1"/>
    <property type="match status" value="1"/>
</dbReference>
<dbReference type="NCBIfam" id="TIGR03723">
    <property type="entry name" value="T6A_TsaD_YgjD"/>
    <property type="match status" value="1"/>
</dbReference>
<dbReference type="PANTHER" id="PTHR11735">
    <property type="entry name" value="TRNA N6-ADENOSINE THREONYLCARBAMOYLTRANSFERASE"/>
    <property type="match status" value="1"/>
</dbReference>
<dbReference type="PANTHER" id="PTHR11735:SF6">
    <property type="entry name" value="TRNA N6-ADENOSINE THREONYLCARBAMOYLTRANSFERASE, MITOCHONDRIAL"/>
    <property type="match status" value="1"/>
</dbReference>
<dbReference type="Pfam" id="PF00814">
    <property type="entry name" value="TsaD"/>
    <property type="match status" value="1"/>
</dbReference>
<dbReference type="PRINTS" id="PR00789">
    <property type="entry name" value="OSIALOPTASE"/>
</dbReference>
<dbReference type="SUPFAM" id="SSF53067">
    <property type="entry name" value="Actin-like ATPase domain"/>
    <property type="match status" value="2"/>
</dbReference>
<organism>
    <name type="scientific">Pseudomonas putida (strain ATCC 700007 / DSM 6899 / JCM 31910 / BCRC 17059 / LMG 24140 / F1)</name>
    <dbReference type="NCBI Taxonomy" id="351746"/>
    <lineage>
        <taxon>Bacteria</taxon>
        <taxon>Pseudomonadati</taxon>
        <taxon>Pseudomonadota</taxon>
        <taxon>Gammaproteobacteria</taxon>
        <taxon>Pseudomonadales</taxon>
        <taxon>Pseudomonadaceae</taxon>
        <taxon>Pseudomonas</taxon>
    </lineage>
</organism>
<accession>A5VXI4</accession>
<keyword id="KW-0012">Acyltransferase</keyword>
<keyword id="KW-0963">Cytoplasm</keyword>
<keyword id="KW-0408">Iron</keyword>
<keyword id="KW-0479">Metal-binding</keyword>
<keyword id="KW-0808">Transferase</keyword>
<keyword id="KW-0819">tRNA processing</keyword>
<sequence length="341" mass="36522">MLVLGLETSCDETGVALYDSERGLLADALFSQIDLHRVFGGVVPELASRDHVKRMLPLIRQVLDEAGCVATEIDAIAYTAGPGLVGALLVGASCAQALAFAWDIPAIGVHHMEGHLLAPMLEENPPAFPFVALLVSGGHTQLVRVDGIGQYELLGESLDDAAGEAFDKTAKLIGLNYPGGPEIARLAEQGVAGRFVFPRPMTDRPGLEFSFSGLKTFALNTWQQCKNAGDDSEQTRCDLSLAFQQAVVETLTIKCKRALKQTGLKRLVIAGGVSANKALRASLEDMLGSIKGNVYYARPQFCTDNGAMIAYAGCQRLLAGQQQDLAISVQARWPMEQLPPL</sequence>
<evidence type="ECO:0000255" key="1">
    <source>
        <dbReference type="HAMAP-Rule" id="MF_01445"/>
    </source>
</evidence>
<feature type="chain" id="PRO_1000024442" description="tRNA N6-adenosine threonylcarbamoyltransferase">
    <location>
        <begin position="1"/>
        <end position="341"/>
    </location>
</feature>
<feature type="binding site" evidence="1">
    <location>
        <position position="111"/>
    </location>
    <ligand>
        <name>Fe cation</name>
        <dbReference type="ChEBI" id="CHEBI:24875"/>
    </ligand>
</feature>
<feature type="binding site" evidence="1">
    <location>
        <position position="115"/>
    </location>
    <ligand>
        <name>Fe cation</name>
        <dbReference type="ChEBI" id="CHEBI:24875"/>
    </ligand>
</feature>
<feature type="binding site" evidence="1">
    <location>
        <begin position="134"/>
        <end position="138"/>
    </location>
    <ligand>
        <name>substrate</name>
    </ligand>
</feature>
<feature type="binding site" evidence="1">
    <location>
        <position position="167"/>
    </location>
    <ligand>
        <name>substrate</name>
    </ligand>
</feature>
<feature type="binding site" evidence="1">
    <location>
        <position position="180"/>
    </location>
    <ligand>
        <name>substrate</name>
    </ligand>
</feature>
<feature type="binding site" evidence="1">
    <location>
        <position position="276"/>
    </location>
    <ligand>
        <name>substrate</name>
    </ligand>
</feature>
<feature type="binding site" evidence="1">
    <location>
        <position position="304"/>
    </location>
    <ligand>
        <name>Fe cation</name>
        <dbReference type="ChEBI" id="CHEBI:24875"/>
    </ligand>
</feature>